<proteinExistence type="evidence at transcript level"/>
<feature type="chain" id="PRO_0000182748" description="Glutamate dehydrogenase">
    <location>
        <begin position="1"/>
        <end position="412"/>
    </location>
</feature>
<feature type="active site" evidence="1">
    <location>
        <position position="102"/>
    </location>
</feature>
<name>DHE3_SOLLC</name>
<comment type="catalytic activity">
    <reaction evidence="1">
        <text>L-glutamate + NAD(+) + H2O = 2-oxoglutarate + NH4(+) + NADH + H(+)</text>
        <dbReference type="Rhea" id="RHEA:15133"/>
        <dbReference type="ChEBI" id="CHEBI:15377"/>
        <dbReference type="ChEBI" id="CHEBI:15378"/>
        <dbReference type="ChEBI" id="CHEBI:16810"/>
        <dbReference type="ChEBI" id="CHEBI:28938"/>
        <dbReference type="ChEBI" id="CHEBI:29985"/>
        <dbReference type="ChEBI" id="CHEBI:57540"/>
        <dbReference type="ChEBI" id="CHEBI:57945"/>
        <dbReference type="EC" id="1.4.1.3"/>
    </reaction>
</comment>
<comment type="catalytic activity">
    <reaction evidence="1">
        <text>L-glutamate + NADP(+) + H2O = 2-oxoglutarate + NH4(+) + NADPH + H(+)</text>
        <dbReference type="Rhea" id="RHEA:11612"/>
        <dbReference type="ChEBI" id="CHEBI:15377"/>
        <dbReference type="ChEBI" id="CHEBI:15378"/>
        <dbReference type="ChEBI" id="CHEBI:16810"/>
        <dbReference type="ChEBI" id="CHEBI:28938"/>
        <dbReference type="ChEBI" id="CHEBI:29985"/>
        <dbReference type="ChEBI" id="CHEBI:57783"/>
        <dbReference type="ChEBI" id="CHEBI:58349"/>
        <dbReference type="EC" id="1.4.1.3"/>
    </reaction>
</comment>
<comment type="subcellular location">
    <subcellularLocation>
        <location evidence="2">Mitochondrion matrix</location>
    </subcellularLocation>
</comment>
<comment type="tissue specificity">
    <text>In roots, stems, leaves and flowers but not in fruits.</text>
</comment>
<comment type="similarity">
    <text evidence="2">Belongs to the Glu/Leu/Phe/Val dehydrogenases family.</text>
</comment>
<reference key="1">
    <citation type="journal article" date="1997" name="Gene">
        <title>Cloning and characterisation of a glutamate dehydrogenase cDNA from tomato (Lycopersicon esculentum L.).</title>
        <authorList>
            <person name="Purnell M.P."/>
            <person name="Stewart G.R."/>
            <person name="Botella J.R."/>
        </authorList>
    </citation>
    <scope>NUCLEOTIDE SEQUENCE [MRNA]</scope>
    <source>
        <strain>cv. Pera</strain>
    </source>
</reference>
<sequence>MNALAATNRNFKLAARLLGLDSKLELSLLIPFREIKVECTIPKDDGTLASFVGFRVQHDNARGPMKGGIRYHPEVDPDEVNALAQLMTWKTAVANIPYGGAKGGIGCSPSDLSISELERLTRVFTQKIHDLIGIHTDVPAPDMGTNPQTMAWILDEYSKFHGYSPAVVTGKPVDLGGSLGRDAATGRGALFATEALLNEHGKSVAGQRFVIQGFGNVGSWAAKLIHEQGGKVVAVSDITGAIKNEKGIDIESLFKHVKETRGVKGFHDAHPIDANSILVEDCDVLIPAALGGVINKDNHKLKIKAKYIIEAANHPTDPEADEILSKKGVTILPDIYANSGGVTVSYFEWVQNIQGFMWDEKKVNDELKTYMTRGFKDVKDMCKTHNCDLRMGAFTLGVNRVARATVLRGWEA</sequence>
<accession>P93541</accession>
<dbReference type="EC" id="1.4.1.3"/>
<dbReference type="EMBL" id="U48695">
    <property type="protein sequence ID" value="AAB39508.1"/>
    <property type="molecule type" value="mRNA"/>
</dbReference>
<dbReference type="PIR" id="JC6317">
    <property type="entry name" value="JC6317"/>
</dbReference>
<dbReference type="RefSeq" id="NP_001233850.2">
    <property type="nucleotide sequence ID" value="NM_001246921.2"/>
</dbReference>
<dbReference type="SMR" id="P93541"/>
<dbReference type="FunCoup" id="P93541">
    <property type="interactions" value="1691"/>
</dbReference>
<dbReference type="STRING" id="4081.P93541"/>
<dbReference type="PaxDb" id="4081-Solyc10g078550.1.1"/>
<dbReference type="GeneID" id="544015"/>
<dbReference type="KEGG" id="sly:544015"/>
<dbReference type="eggNOG" id="KOG2250">
    <property type="taxonomic scope" value="Eukaryota"/>
</dbReference>
<dbReference type="InParanoid" id="P93541"/>
<dbReference type="OrthoDB" id="6718861at2759"/>
<dbReference type="BioCyc" id="MetaCyc:MONOMER-15559"/>
<dbReference type="BRENDA" id="1.4.1.2">
    <property type="organism ID" value="3101"/>
</dbReference>
<dbReference type="Proteomes" id="UP000004994">
    <property type="component" value="Unplaced"/>
</dbReference>
<dbReference type="ExpressionAtlas" id="P93541">
    <property type="expression patterns" value="baseline and differential"/>
</dbReference>
<dbReference type="GO" id="GO:0005759">
    <property type="term" value="C:mitochondrial matrix"/>
    <property type="evidence" value="ECO:0007669"/>
    <property type="project" value="UniProtKB-SubCell"/>
</dbReference>
<dbReference type="GO" id="GO:0005739">
    <property type="term" value="C:mitochondrion"/>
    <property type="evidence" value="ECO:0000318"/>
    <property type="project" value="GO_Central"/>
</dbReference>
<dbReference type="GO" id="GO:0004352">
    <property type="term" value="F:glutamate dehydrogenase (NAD+) activity"/>
    <property type="evidence" value="ECO:0000318"/>
    <property type="project" value="GO_Central"/>
</dbReference>
<dbReference type="GO" id="GO:0004354">
    <property type="term" value="F:glutamate dehydrogenase (NADP+) activity"/>
    <property type="evidence" value="ECO:0007669"/>
    <property type="project" value="RHEA"/>
</dbReference>
<dbReference type="GO" id="GO:0006538">
    <property type="term" value="P:glutamate catabolic process"/>
    <property type="evidence" value="ECO:0000318"/>
    <property type="project" value="GO_Central"/>
</dbReference>
<dbReference type="CDD" id="cd01076">
    <property type="entry name" value="NAD_bind_1_Glu_DH"/>
    <property type="match status" value="1"/>
</dbReference>
<dbReference type="FunFam" id="3.40.50.10860:FF:000003">
    <property type="entry name" value="Glutamate dehydrogenase"/>
    <property type="match status" value="1"/>
</dbReference>
<dbReference type="FunFam" id="3.40.50.720:FF:000212">
    <property type="entry name" value="Glutamate dehydrogenase"/>
    <property type="match status" value="1"/>
</dbReference>
<dbReference type="Gene3D" id="3.40.50.10860">
    <property type="entry name" value="Leucine Dehydrogenase, chain A, domain 1"/>
    <property type="match status" value="1"/>
</dbReference>
<dbReference type="Gene3D" id="3.40.50.720">
    <property type="entry name" value="NAD(P)-binding Rossmann-like Domain"/>
    <property type="match status" value="1"/>
</dbReference>
<dbReference type="InterPro" id="IPR046346">
    <property type="entry name" value="Aminoacid_DH-like_N_sf"/>
</dbReference>
<dbReference type="InterPro" id="IPR006095">
    <property type="entry name" value="Glu/Leu/Phe/Val/Trp_DH"/>
</dbReference>
<dbReference type="InterPro" id="IPR006096">
    <property type="entry name" value="Glu/Leu/Phe/Val/Trp_DH_C"/>
</dbReference>
<dbReference type="InterPro" id="IPR006097">
    <property type="entry name" value="Glu/Leu/Phe/Val/Trp_DH_dimer"/>
</dbReference>
<dbReference type="InterPro" id="IPR033524">
    <property type="entry name" value="Glu/Leu/Phe/Val_DH_AS"/>
</dbReference>
<dbReference type="InterPro" id="IPR014362">
    <property type="entry name" value="Glu_DH"/>
</dbReference>
<dbReference type="InterPro" id="IPR036291">
    <property type="entry name" value="NAD(P)-bd_dom_sf"/>
</dbReference>
<dbReference type="InterPro" id="IPR033922">
    <property type="entry name" value="NAD_bind_Glu_DH"/>
</dbReference>
<dbReference type="PANTHER" id="PTHR11606">
    <property type="entry name" value="GLUTAMATE DEHYDROGENASE"/>
    <property type="match status" value="1"/>
</dbReference>
<dbReference type="PANTHER" id="PTHR11606:SF29">
    <property type="entry name" value="GLUTAMATE DEHYDROGENASE 3-RELATED"/>
    <property type="match status" value="1"/>
</dbReference>
<dbReference type="Pfam" id="PF00208">
    <property type="entry name" value="ELFV_dehydrog"/>
    <property type="match status" value="1"/>
</dbReference>
<dbReference type="Pfam" id="PF02812">
    <property type="entry name" value="ELFV_dehydrog_N"/>
    <property type="match status" value="1"/>
</dbReference>
<dbReference type="PIRSF" id="PIRSF000185">
    <property type="entry name" value="Glu_DH"/>
    <property type="match status" value="1"/>
</dbReference>
<dbReference type="PRINTS" id="PR00082">
    <property type="entry name" value="GLFDHDRGNASE"/>
</dbReference>
<dbReference type="SMART" id="SM00839">
    <property type="entry name" value="ELFV_dehydrog"/>
    <property type="match status" value="1"/>
</dbReference>
<dbReference type="SUPFAM" id="SSF53223">
    <property type="entry name" value="Aminoacid dehydrogenase-like, N-terminal domain"/>
    <property type="match status" value="1"/>
</dbReference>
<dbReference type="SUPFAM" id="SSF51735">
    <property type="entry name" value="NAD(P)-binding Rossmann-fold domains"/>
    <property type="match status" value="1"/>
</dbReference>
<dbReference type="PROSITE" id="PS00074">
    <property type="entry name" value="GLFV_DEHYDROGENASE"/>
    <property type="match status" value="1"/>
</dbReference>
<organism>
    <name type="scientific">Solanum lycopersicum</name>
    <name type="common">Tomato</name>
    <name type="synonym">Lycopersicon esculentum</name>
    <dbReference type="NCBI Taxonomy" id="4081"/>
    <lineage>
        <taxon>Eukaryota</taxon>
        <taxon>Viridiplantae</taxon>
        <taxon>Streptophyta</taxon>
        <taxon>Embryophyta</taxon>
        <taxon>Tracheophyta</taxon>
        <taxon>Spermatophyta</taxon>
        <taxon>Magnoliopsida</taxon>
        <taxon>eudicotyledons</taxon>
        <taxon>Gunneridae</taxon>
        <taxon>Pentapetalae</taxon>
        <taxon>asterids</taxon>
        <taxon>lamiids</taxon>
        <taxon>Solanales</taxon>
        <taxon>Solanaceae</taxon>
        <taxon>Solanoideae</taxon>
        <taxon>Solaneae</taxon>
        <taxon>Solanum</taxon>
        <taxon>Solanum subgen. Lycopersicon</taxon>
    </lineage>
</organism>
<protein>
    <recommendedName>
        <fullName>Glutamate dehydrogenase</fullName>
        <shortName>GDH</shortName>
        <ecNumber>1.4.1.3</ecNumber>
    </recommendedName>
    <alternativeName>
        <fullName>Legdh1</fullName>
    </alternativeName>
</protein>
<evidence type="ECO:0000255" key="1">
    <source>
        <dbReference type="PROSITE-ProRule" id="PRU10011"/>
    </source>
</evidence>
<evidence type="ECO:0000305" key="2"/>
<keyword id="KW-0496">Mitochondrion</keyword>
<keyword id="KW-0520">NAD</keyword>
<keyword id="KW-0560">Oxidoreductase</keyword>
<keyword id="KW-1185">Reference proteome</keyword>
<gene>
    <name type="primary">GDH1</name>
</gene>